<name>ATPF_ACIC1</name>
<keyword id="KW-0066">ATP synthesis</keyword>
<keyword id="KW-1003">Cell membrane</keyword>
<keyword id="KW-0138">CF(0)</keyword>
<keyword id="KW-0375">Hydrogen ion transport</keyword>
<keyword id="KW-0406">Ion transport</keyword>
<keyword id="KW-0472">Membrane</keyword>
<keyword id="KW-1185">Reference proteome</keyword>
<keyword id="KW-0812">Transmembrane</keyword>
<keyword id="KW-1133">Transmembrane helix</keyword>
<keyword id="KW-0813">Transport</keyword>
<evidence type="ECO:0000255" key="1">
    <source>
        <dbReference type="HAMAP-Rule" id="MF_01398"/>
    </source>
</evidence>
<evidence type="ECO:0000256" key="2">
    <source>
        <dbReference type="SAM" id="MobiDB-lite"/>
    </source>
</evidence>
<organism>
    <name type="scientific">Acidothermus cellulolyticus (strain ATCC 43068 / DSM 8971 / 11B)</name>
    <dbReference type="NCBI Taxonomy" id="351607"/>
    <lineage>
        <taxon>Bacteria</taxon>
        <taxon>Bacillati</taxon>
        <taxon>Actinomycetota</taxon>
        <taxon>Actinomycetes</taxon>
        <taxon>Acidothermales</taxon>
        <taxon>Acidothermaceae</taxon>
        <taxon>Acidothermus</taxon>
    </lineage>
</organism>
<sequence length="191" mass="21644">MPPRTLADNFLVPGPTAIAELIVFLLILFIFGKYIVPFVNQKLAERQELIRSQFEEAKRARDEAEAAAAEYRAQLQEIRAEATRVRERAHEEGQQIIAEMKEQARREADRIVRAAEEQIQAERARAVAAVRAEVGSLAVELASRIVGESLADVERQHRIVERFLAELEERAQRQPAASDVVGGQQREEVHR</sequence>
<dbReference type="EMBL" id="CP000481">
    <property type="protein sequence ID" value="ABK52422.1"/>
    <property type="molecule type" value="Genomic_DNA"/>
</dbReference>
<dbReference type="RefSeq" id="WP_011719485.1">
    <property type="nucleotide sequence ID" value="NC_008578.1"/>
</dbReference>
<dbReference type="SMR" id="A0LSL2"/>
<dbReference type="FunCoup" id="A0LSL2">
    <property type="interactions" value="36"/>
</dbReference>
<dbReference type="STRING" id="351607.Acel_0649"/>
<dbReference type="KEGG" id="ace:Acel_0649"/>
<dbReference type="eggNOG" id="COG0711">
    <property type="taxonomic scope" value="Bacteria"/>
</dbReference>
<dbReference type="HOGENOM" id="CLU_079215_5_2_11"/>
<dbReference type="InParanoid" id="A0LSL2"/>
<dbReference type="OrthoDB" id="5243563at2"/>
<dbReference type="Proteomes" id="UP000008221">
    <property type="component" value="Chromosome"/>
</dbReference>
<dbReference type="GO" id="GO:0005886">
    <property type="term" value="C:plasma membrane"/>
    <property type="evidence" value="ECO:0007669"/>
    <property type="project" value="UniProtKB-SubCell"/>
</dbReference>
<dbReference type="GO" id="GO:0045259">
    <property type="term" value="C:proton-transporting ATP synthase complex"/>
    <property type="evidence" value="ECO:0007669"/>
    <property type="project" value="UniProtKB-KW"/>
</dbReference>
<dbReference type="GO" id="GO:0046933">
    <property type="term" value="F:proton-transporting ATP synthase activity, rotational mechanism"/>
    <property type="evidence" value="ECO:0007669"/>
    <property type="project" value="UniProtKB-UniRule"/>
</dbReference>
<dbReference type="GO" id="GO:0046961">
    <property type="term" value="F:proton-transporting ATPase activity, rotational mechanism"/>
    <property type="evidence" value="ECO:0007669"/>
    <property type="project" value="TreeGrafter"/>
</dbReference>
<dbReference type="CDD" id="cd06503">
    <property type="entry name" value="ATP-synt_Fo_b"/>
    <property type="match status" value="1"/>
</dbReference>
<dbReference type="Gene3D" id="1.20.5.620">
    <property type="entry name" value="F1F0 ATP synthase subunit B, membrane domain"/>
    <property type="match status" value="1"/>
</dbReference>
<dbReference type="HAMAP" id="MF_01398">
    <property type="entry name" value="ATP_synth_b_bprime"/>
    <property type="match status" value="1"/>
</dbReference>
<dbReference type="InterPro" id="IPR028987">
    <property type="entry name" value="ATP_synth_B-like_membr_sf"/>
</dbReference>
<dbReference type="InterPro" id="IPR002146">
    <property type="entry name" value="ATP_synth_b/b'su_bac/chlpt"/>
</dbReference>
<dbReference type="InterPro" id="IPR005864">
    <property type="entry name" value="ATP_synth_F0_bsu_bac"/>
</dbReference>
<dbReference type="InterPro" id="IPR050059">
    <property type="entry name" value="ATP_synthase_B_chain"/>
</dbReference>
<dbReference type="NCBIfam" id="TIGR01144">
    <property type="entry name" value="ATP_synt_b"/>
    <property type="match status" value="1"/>
</dbReference>
<dbReference type="NCBIfam" id="NF004412">
    <property type="entry name" value="PRK05759.1-3"/>
    <property type="match status" value="1"/>
</dbReference>
<dbReference type="PANTHER" id="PTHR33445:SF1">
    <property type="entry name" value="ATP SYNTHASE SUBUNIT B"/>
    <property type="match status" value="1"/>
</dbReference>
<dbReference type="PANTHER" id="PTHR33445">
    <property type="entry name" value="ATP SYNTHASE SUBUNIT B', CHLOROPLASTIC"/>
    <property type="match status" value="1"/>
</dbReference>
<dbReference type="Pfam" id="PF00430">
    <property type="entry name" value="ATP-synt_B"/>
    <property type="match status" value="1"/>
</dbReference>
<dbReference type="SUPFAM" id="SSF81573">
    <property type="entry name" value="F1F0 ATP synthase subunit B, membrane domain"/>
    <property type="match status" value="1"/>
</dbReference>
<feature type="chain" id="PRO_0000368285" description="ATP synthase subunit b">
    <location>
        <begin position="1"/>
        <end position="191"/>
    </location>
</feature>
<feature type="transmembrane region" description="Helical" evidence="1">
    <location>
        <begin position="10"/>
        <end position="30"/>
    </location>
</feature>
<feature type="region of interest" description="Disordered" evidence="2">
    <location>
        <begin position="170"/>
        <end position="191"/>
    </location>
</feature>
<comment type="function">
    <text evidence="1">F(1)F(0) ATP synthase produces ATP from ADP in the presence of a proton or sodium gradient. F-type ATPases consist of two structural domains, F(1) containing the extramembraneous catalytic core and F(0) containing the membrane proton channel, linked together by a central stalk and a peripheral stalk. During catalysis, ATP synthesis in the catalytic domain of F(1) is coupled via a rotary mechanism of the central stalk subunits to proton translocation.</text>
</comment>
<comment type="function">
    <text evidence="1">Component of the F(0) channel, it forms part of the peripheral stalk, linking F(1) to F(0).</text>
</comment>
<comment type="subunit">
    <text evidence="1">F-type ATPases have 2 components, F(1) - the catalytic core - and F(0) - the membrane proton channel. F(1) has five subunits: alpha(3), beta(3), gamma(1), delta(1), epsilon(1). F(0) has three main subunits: a(1), b(2) and c(10-14). The alpha and beta chains form an alternating ring which encloses part of the gamma chain. F(1) is attached to F(0) by a central stalk formed by the gamma and epsilon chains, while a peripheral stalk is formed by the delta and b chains.</text>
</comment>
<comment type="subcellular location">
    <subcellularLocation>
        <location evidence="1">Cell membrane</location>
        <topology evidence="1">Single-pass membrane protein</topology>
    </subcellularLocation>
</comment>
<comment type="similarity">
    <text evidence="1">Belongs to the ATPase B chain family.</text>
</comment>
<gene>
    <name evidence="1" type="primary">atpF</name>
    <name type="ordered locus">Acel_0649</name>
</gene>
<reference key="1">
    <citation type="journal article" date="2009" name="Genome Res.">
        <title>Complete genome of the cellulolytic thermophile Acidothermus cellulolyticus 11B provides insights into its ecophysiological and evolutionary adaptations.</title>
        <authorList>
            <person name="Barabote R.D."/>
            <person name="Xie G."/>
            <person name="Leu D.H."/>
            <person name="Normand P."/>
            <person name="Necsulea A."/>
            <person name="Daubin V."/>
            <person name="Medigue C."/>
            <person name="Adney W.S."/>
            <person name="Xu X.C."/>
            <person name="Lapidus A."/>
            <person name="Parales R.E."/>
            <person name="Detter C."/>
            <person name="Pujic P."/>
            <person name="Bruce D."/>
            <person name="Lavire C."/>
            <person name="Challacombe J.F."/>
            <person name="Brettin T.S."/>
            <person name="Berry A.M."/>
        </authorList>
    </citation>
    <scope>NUCLEOTIDE SEQUENCE [LARGE SCALE GENOMIC DNA]</scope>
    <source>
        <strain>ATCC 43068 / DSM 8971 / 11B</strain>
    </source>
</reference>
<accession>A0LSL2</accession>
<protein>
    <recommendedName>
        <fullName evidence="1">ATP synthase subunit b</fullName>
    </recommendedName>
    <alternativeName>
        <fullName evidence="1">ATP synthase F(0) sector subunit b</fullName>
    </alternativeName>
    <alternativeName>
        <fullName evidence="1">ATPase subunit I</fullName>
    </alternativeName>
    <alternativeName>
        <fullName evidence="1">F-type ATPase subunit b</fullName>
        <shortName evidence="1">F-ATPase subunit b</shortName>
    </alternativeName>
</protein>
<proteinExistence type="inferred from homology"/>